<evidence type="ECO:0000250" key="1">
    <source>
        <dbReference type="UniProtKB" id="P34405"/>
    </source>
</evidence>
<evidence type="ECO:0000255" key="2"/>
<evidence type="ECO:0000269" key="3">
    <source>
    </source>
</evidence>
<evidence type="ECO:0000303" key="4">
    <source>
    </source>
</evidence>
<evidence type="ECO:0000305" key="5"/>
<evidence type="ECO:0000305" key="6">
    <source>
    </source>
</evidence>
<organism>
    <name type="scientific">Praedatophasma maraisi</name>
    <name type="common">Gladiator</name>
    <name type="synonym">Heel-walker</name>
    <dbReference type="NCBI Taxonomy" id="409170"/>
    <lineage>
        <taxon>Eukaryota</taxon>
        <taxon>Metazoa</taxon>
        <taxon>Ecdysozoa</taxon>
        <taxon>Arthropoda</taxon>
        <taxon>Hexapoda</taxon>
        <taxon>Insecta</taxon>
        <taxon>Pterygota</taxon>
        <taxon>Neoptera</taxon>
        <taxon>Polyneoptera</taxon>
        <taxon>Mantophasmatodea</taxon>
        <taxon>Mantophasmatidae</taxon>
        <taxon>Praedatophasma</taxon>
    </lineage>
</organism>
<accession>B3A0G0</accession>
<feature type="peptide" id="PRO_0000421500" description="Extended FMRFamide-3" evidence="3">
    <location>
        <begin position="1"/>
        <end position="9"/>
    </location>
</feature>
<feature type="modified residue" description="Leucine amide" evidence="3">
    <location>
        <position position="9"/>
    </location>
</feature>
<feature type="unsure residue" description="L or I" evidence="3">
    <location>
        <position position="7"/>
    </location>
</feature>
<feature type="unsure residue" description="L or I" evidence="3">
    <location>
        <position position="9"/>
    </location>
</feature>
<dbReference type="GO" id="GO:0005576">
    <property type="term" value="C:extracellular region"/>
    <property type="evidence" value="ECO:0007669"/>
    <property type="project" value="UniProtKB-SubCell"/>
</dbReference>
<dbReference type="GO" id="GO:0007218">
    <property type="term" value="P:neuropeptide signaling pathway"/>
    <property type="evidence" value="ECO:0007669"/>
    <property type="project" value="UniProtKB-KW"/>
</dbReference>
<sequence>GPETAFLRL</sequence>
<protein>
    <recommendedName>
        <fullName evidence="4">Extended FMRFamide-3</fullName>
        <shortName evidence="4">FMRFa-3</shortName>
    </recommendedName>
</protein>
<reference evidence="5" key="1">
    <citation type="journal article" date="2012" name="Syst. Biol.">
        <title>Peptidomics-based phylogeny and biogeography of Mantophasmatodea (Hexapoda).</title>
        <authorList>
            <person name="Predel R."/>
            <person name="Neupert S."/>
            <person name="Huetteroth W."/>
            <person name="Kahnt J."/>
            <person name="Waidelich D."/>
            <person name="Roth S."/>
        </authorList>
    </citation>
    <scope>PROTEIN SEQUENCE</scope>
    <scope>AMIDATION AT LEU-9</scope>
    <source>
        <tissue evidence="3">Thoracic perisympathetic organs</tissue>
    </source>
</reference>
<name>FAR3_PRAMA</name>
<keyword id="KW-0027">Amidation</keyword>
<keyword id="KW-0903">Direct protein sequencing</keyword>
<keyword id="KW-0527">Neuropeptide</keyword>
<keyword id="KW-0964">Secreted</keyword>
<proteinExistence type="evidence at protein level"/>
<comment type="function">
    <text evidence="1">FMRFamides and FMRFamide-like peptides are neuropeptides.</text>
</comment>
<comment type="subcellular location">
    <subcellularLocation>
        <location evidence="6">Secreted</location>
    </subcellularLocation>
</comment>
<comment type="similarity">
    <text evidence="2">Belongs to the FARP (FMRF amide related peptide) family.</text>
</comment>